<gene>
    <name evidence="1" type="primary">ribH</name>
    <name type="ordered locus">Bcep1808_0873</name>
</gene>
<reference key="1">
    <citation type="submission" date="2007-03" db="EMBL/GenBank/DDBJ databases">
        <title>Complete sequence of chromosome 1 of Burkholderia vietnamiensis G4.</title>
        <authorList>
            <consortium name="US DOE Joint Genome Institute"/>
            <person name="Copeland A."/>
            <person name="Lucas S."/>
            <person name="Lapidus A."/>
            <person name="Barry K."/>
            <person name="Detter J.C."/>
            <person name="Glavina del Rio T."/>
            <person name="Hammon N."/>
            <person name="Israni S."/>
            <person name="Dalin E."/>
            <person name="Tice H."/>
            <person name="Pitluck S."/>
            <person name="Chain P."/>
            <person name="Malfatti S."/>
            <person name="Shin M."/>
            <person name="Vergez L."/>
            <person name="Schmutz J."/>
            <person name="Larimer F."/>
            <person name="Land M."/>
            <person name="Hauser L."/>
            <person name="Kyrpides N."/>
            <person name="Tiedje J."/>
            <person name="Richardson P."/>
        </authorList>
    </citation>
    <scope>NUCLEOTIDE SEQUENCE [LARGE SCALE GENOMIC DNA]</scope>
    <source>
        <strain>G4 / LMG 22486</strain>
    </source>
</reference>
<name>RISB_BURVG</name>
<proteinExistence type="inferred from homology"/>
<accession>A4JC82</accession>
<protein>
    <recommendedName>
        <fullName evidence="1">6,7-dimethyl-8-ribityllumazine synthase</fullName>
        <shortName evidence="1">DMRL synthase</shortName>
        <shortName evidence="1">LS</shortName>
        <shortName evidence="1">Lumazine synthase</shortName>
        <ecNumber evidence="1">2.5.1.78</ecNumber>
    </recommendedName>
</protein>
<feature type="chain" id="PRO_1000040386" description="6,7-dimethyl-8-ribityllumazine synthase">
    <location>
        <begin position="1"/>
        <end position="169"/>
    </location>
</feature>
<feature type="active site" description="Proton donor" evidence="1">
    <location>
        <position position="90"/>
    </location>
</feature>
<feature type="binding site" evidence="1">
    <location>
        <position position="24"/>
    </location>
    <ligand>
        <name>5-amino-6-(D-ribitylamino)uracil</name>
        <dbReference type="ChEBI" id="CHEBI:15934"/>
    </ligand>
</feature>
<feature type="binding site" evidence="1">
    <location>
        <begin position="58"/>
        <end position="60"/>
    </location>
    <ligand>
        <name>5-amino-6-(D-ribitylamino)uracil</name>
        <dbReference type="ChEBI" id="CHEBI:15934"/>
    </ligand>
</feature>
<feature type="binding site" evidence="1">
    <location>
        <begin position="82"/>
        <end position="84"/>
    </location>
    <ligand>
        <name>5-amino-6-(D-ribitylamino)uracil</name>
        <dbReference type="ChEBI" id="CHEBI:15934"/>
    </ligand>
</feature>
<feature type="binding site" evidence="1">
    <location>
        <begin position="87"/>
        <end position="88"/>
    </location>
    <ligand>
        <name>(2S)-2-hydroxy-3-oxobutyl phosphate</name>
        <dbReference type="ChEBI" id="CHEBI:58830"/>
    </ligand>
</feature>
<feature type="binding site" evidence="1">
    <location>
        <position position="115"/>
    </location>
    <ligand>
        <name>5-amino-6-(D-ribitylamino)uracil</name>
        <dbReference type="ChEBI" id="CHEBI:15934"/>
    </ligand>
</feature>
<feature type="binding site" evidence="1">
    <location>
        <position position="129"/>
    </location>
    <ligand>
        <name>(2S)-2-hydroxy-3-oxobutyl phosphate</name>
        <dbReference type="ChEBI" id="CHEBI:58830"/>
    </ligand>
</feature>
<organism>
    <name type="scientific">Burkholderia vietnamiensis (strain G4 / LMG 22486)</name>
    <name type="common">Burkholderia cepacia (strain R1808)</name>
    <dbReference type="NCBI Taxonomy" id="269482"/>
    <lineage>
        <taxon>Bacteria</taxon>
        <taxon>Pseudomonadati</taxon>
        <taxon>Pseudomonadota</taxon>
        <taxon>Betaproteobacteria</taxon>
        <taxon>Burkholderiales</taxon>
        <taxon>Burkholderiaceae</taxon>
        <taxon>Burkholderia</taxon>
        <taxon>Burkholderia cepacia complex</taxon>
    </lineage>
</organism>
<comment type="function">
    <text evidence="1">Catalyzes the formation of 6,7-dimethyl-8-ribityllumazine by condensation of 5-amino-6-(D-ribitylamino)uracil with 3,4-dihydroxy-2-butanone 4-phosphate. This is the penultimate step in the biosynthesis of riboflavin.</text>
</comment>
<comment type="catalytic activity">
    <reaction evidence="1">
        <text>(2S)-2-hydroxy-3-oxobutyl phosphate + 5-amino-6-(D-ribitylamino)uracil = 6,7-dimethyl-8-(1-D-ribityl)lumazine + phosphate + 2 H2O + H(+)</text>
        <dbReference type="Rhea" id="RHEA:26152"/>
        <dbReference type="ChEBI" id="CHEBI:15377"/>
        <dbReference type="ChEBI" id="CHEBI:15378"/>
        <dbReference type="ChEBI" id="CHEBI:15934"/>
        <dbReference type="ChEBI" id="CHEBI:43474"/>
        <dbReference type="ChEBI" id="CHEBI:58201"/>
        <dbReference type="ChEBI" id="CHEBI:58830"/>
        <dbReference type="EC" id="2.5.1.78"/>
    </reaction>
</comment>
<comment type="pathway">
    <text evidence="1">Cofactor biosynthesis; riboflavin biosynthesis; riboflavin from 2-hydroxy-3-oxobutyl phosphate and 5-amino-6-(D-ribitylamino)uracil: step 1/2.</text>
</comment>
<comment type="similarity">
    <text evidence="1">Belongs to the DMRL synthase family.</text>
</comment>
<sequence>MEIGQYQPNLEGDGLRIGIVQSRFNEPVCNGLADACVEELERLGVSGEDVLLVSVPGALEIPLALQKLAESGQFDALIALGAVIRGETYHFELVSNESGAGITRIGLDFNLPIANAVLTTENDEQAVARMTEKGRDAARVAVEMANLTMALDQLGDDEEEDEDDEEERA</sequence>
<keyword id="KW-0686">Riboflavin biosynthesis</keyword>
<keyword id="KW-0808">Transferase</keyword>
<evidence type="ECO:0000255" key="1">
    <source>
        <dbReference type="HAMAP-Rule" id="MF_00178"/>
    </source>
</evidence>
<dbReference type="EC" id="2.5.1.78" evidence="1"/>
<dbReference type="EMBL" id="CP000614">
    <property type="protein sequence ID" value="ABO53885.1"/>
    <property type="molecule type" value="Genomic_DNA"/>
</dbReference>
<dbReference type="SMR" id="A4JC82"/>
<dbReference type="KEGG" id="bvi:Bcep1808_0873"/>
<dbReference type="eggNOG" id="COG0054">
    <property type="taxonomic scope" value="Bacteria"/>
</dbReference>
<dbReference type="HOGENOM" id="CLU_089358_1_2_4"/>
<dbReference type="UniPathway" id="UPA00275">
    <property type="reaction ID" value="UER00404"/>
</dbReference>
<dbReference type="Proteomes" id="UP000002287">
    <property type="component" value="Chromosome 1"/>
</dbReference>
<dbReference type="GO" id="GO:0005829">
    <property type="term" value="C:cytosol"/>
    <property type="evidence" value="ECO:0007669"/>
    <property type="project" value="TreeGrafter"/>
</dbReference>
<dbReference type="GO" id="GO:0009349">
    <property type="term" value="C:riboflavin synthase complex"/>
    <property type="evidence" value="ECO:0007669"/>
    <property type="project" value="InterPro"/>
</dbReference>
<dbReference type="GO" id="GO:0000906">
    <property type="term" value="F:6,7-dimethyl-8-ribityllumazine synthase activity"/>
    <property type="evidence" value="ECO:0007669"/>
    <property type="project" value="UniProtKB-UniRule"/>
</dbReference>
<dbReference type="GO" id="GO:0009231">
    <property type="term" value="P:riboflavin biosynthetic process"/>
    <property type="evidence" value="ECO:0007669"/>
    <property type="project" value="UniProtKB-UniRule"/>
</dbReference>
<dbReference type="CDD" id="cd09209">
    <property type="entry name" value="Lumazine_synthase-I"/>
    <property type="match status" value="1"/>
</dbReference>
<dbReference type="Gene3D" id="3.40.50.960">
    <property type="entry name" value="Lumazine/riboflavin synthase"/>
    <property type="match status" value="1"/>
</dbReference>
<dbReference type="HAMAP" id="MF_00178">
    <property type="entry name" value="Lumazine_synth"/>
    <property type="match status" value="1"/>
</dbReference>
<dbReference type="InterPro" id="IPR034964">
    <property type="entry name" value="LS"/>
</dbReference>
<dbReference type="InterPro" id="IPR002180">
    <property type="entry name" value="LS/RS"/>
</dbReference>
<dbReference type="InterPro" id="IPR036467">
    <property type="entry name" value="LS/RS_sf"/>
</dbReference>
<dbReference type="NCBIfam" id="TIGR00114">
    <property type="entry name" value="lumazine-synth"/>
    <property type="match status" value="1"/>
</dbReference>
<dbReference type="PANTHER" id="PTHR21058:SF0">
    <property type="entry name" value="6,7-DIMETHYL-8-RIBITYLLUMAZINE SYNTHASE"/>
    <property type="match status" value="1"/>
</dbReference>
<dbReference type="PANTHER" id="PTHR21058">
    <property type="entry name" value="6,7-DIMETHYL-8-RIBITYLLUMAZINE SYNTHASE DMRL SYNTHASE LUMAZINE SYNTHASE"/>
    <property type="match status" value="1"/>
</dbReference>
<dbReference type="Pfam" id="PF00885">
    <property type="entry name" value="DMRL_synthase"/>
    <property type="match status" value="1"/>
</dbReference>
<dbReference type="SUPFAM" id="SSF52121">
    <property type="entry name" value="Lumazine synthase"/>
    <property type="match status" value="1"/>
</dbReference>